<reference key="1">
    <citation type="journal article" date="1991" name="Gen. Comp. Endocrinol.">
        <title>Primary structure of pancreatic polypeptide from four species of Perissodactyla (Przewalski's horse, zebra, rhino, tapir).</title>
        <authorList>
            <person name="Henry J.S."/>
            <person name="Lance V.A."/>
            <person name="Conlon J.M."/>
        </authorList>
    </citation>
    <scope>PROTEIN SEQUENCE</scope>
    <scope>AMIDATION AT TYR-36</scope>
    <source>
        <tissue>Pancreas</tissue>
    </source>
</reference>
<sequence length="36" mass="4215">APMEPVYPGDNATPEQMAQYAAELRRYINMLTRPRY</sequence>
<gene>
    <name type="primary">PPY</name>
</gene>
<protein>
    <recommendedName>
        <fullName evidence="3">Pancreatic polypeptide</fullName>
        <shortName evidence="3">PP</shortName>
    </recommendedName>
</protein>
<accession>P68009</accession>
<accession>P38000</accession>
<comment type="function">
    <text evidence="1">Hormone secreted by pancreatic cells that acts as a regulator of pancreatic and gastrointestinal functions probably by signaling through the G protein-coupled receptor NPY4R2.</text>
</comment>
<comment type="subcellular location">
    <subcellularLocation>
        <location evidence="1">Secreted</location>
    </subcellularLocation>
</comment>
<comment type="similarity">
    <text evidence="4">Belongs to the NPY family.</text>
</comment>
<organism>
    <name type="scientific">Equus zebra</name>
    <name type="common">Mountain zebra</name>
    <dbReference type="NCBI Taxonomy" id="9791"/>
    <lineage>
        <taxon>Eukaryota</taxon>
        <taxon>Metazoa</taxon>
        <taxon>Chordata</taxon>
        <taxon>Craniata</taxon>
        <taxon>Vertebrata</taxon>
        <taxon>Euteleostomi</taxon>
        <taxon>Mammalia</taxon>
        <taxon>Eutheria</taxon>
        <taxon>Laurasiatheria</taxon>
        <taxon>Perissodactyla</taxon>
        <taxon>Equidae</taxon>
        <taxon>Equus</taxon>
    </lineage>
</organism>
<keyword id="KW-0027">Amidation</keyword>
<keyword id="KW-0903">Direct protein sequencing</keyword>
<keyword id="KW-0372">Hormone</keyword>
<keyword id="KW-0964">Secreted</keyword>
<proteinExistence type="evidence at protein level"/>
<dbReference type="PIR" id="A61132">
    <property type="entry name" value="A61132"/>
</dbReference>
<dbReference type="SMR" id="P68009"/>
<dbReference type="GO" id="GO:0005615">
    <property type="term" value="C:extracellular space"/>
    <property type="evidence" value="ECO:0007669"/>
    <property type="project" value="TreeGrafter"/>
</dbReference>
<dbReference type="GO" id="GO:0005184">
    <property type="term" value="F:neuropeptide hormone activity"/>
    <property type="evidence" value="ECO:0007669"/>
    <property type="project" value="TreeGrafter"/>
</dbReference>
<dbReference type="GO" id="GO:0031841">
    <property type="term" value="F:neuropeptide Y receptor binding"/>
    <property type="evidence" value="ECO:0007669"/>
    <property type="project" value="TreeGrafter"/>
</dbReference>
<dbReference type="GO" id="GO:0007631">
    <property type="term" value="P:feeding behavior"/>
    <property type="evidence" value="ECO:0007669"/>
    <property type="project" value="TreeGrafter"/>
</dbReference>
<dbReference type="GO" id="GO:0007218">
    <property type="term" value="P:neuropeptide signaling pathway"/>
    <property type="evidence" value="ECO:0007669"/>
    <property type="project" value="TreeGrafter"/>
</dbReference>
<dbReference type="CDD" id="cd00126">
    <property type="entry name" value="PAH"/>
    <property type="match status" value="1"/>
</dbReference>
<dbReference type="Gene3D" id="6.10.250.900">
    <property type="match status" value="1"/>
</dbReference>
<dbReference type="InterPro" id="IPR001955">
    <property type="entry name" value="Pancreatic_hormone-like"/>
</dbReference>
<dbReference type="InterPro" id="IPR020392">
    <property type="entry name" value="Pancreatic_hormone-like_CS"/>
</dbReference>
<dbReference type="PANTHER" id="PTHR10533">
    <property type="entry name" value="NEUROPEPTIDE Y/PANCREATIC HORMONE/PEPTIDE YY"/>
    <property type="match status" value="1"/>
</dbReference>
<dbReference type="PANTHER" id="PTHR10533:SF2">
    <property type="entry name" value="PANCREATIC POLYPEPTIDE PROHORMONE"/>
    <property type="match status" value="1"/>
</dbReference>
<dbReference type="Pfam" id="PF00159">
    <property type="entry name" value="Hormone_3"/>
    <property type="match status" value="1"/>
</dbReference>
<dbReference type="PRINTS" id="PR00278">
    <property type="entry name" value="PANCHORMONE"/>
</dbReference>
<dbReference type="SMART" id="SM00309">
    <property type="entry name" value="PAH"/>
    <property type="match status" value="1"/>
</dbReference>
<dbReference type="PROSITE" id="PS00265">
    <property type="entry name" value="PANCREATIC_HORMONE_1"/>
    <property type="match status" value="1"/>
</dbReference>
<dbReference type="PROSITE" id="PS50276">
    <property type="entry name" value="PANCREATIC_HORMONE_2"/>
    <property type="match status" value="1"/>
</dbReference>
<feature type="peptide" id="PRO_0000044798" description="Pancreatic polypeptide">
    <location>
        <begin position="1"/>
        <end position="36"/>
    </location>
</feature>
<feature type="modified residue" description="Tyrosine amide" evidence="2">
    <location>
        <position position="36"/>
    </location>
</feature>
<name>PAHO_EQUZE</name>
<evidence type="ECO:0000250" key="1">
    <source>
        <dbReference type="UniProtKB" id="P01298"/>
    </source>
</evidence>
<evidence type="ECO:0000269" key="2">
    <source>
    </source>
</evidence>
<evidence type="ECO:0000303" key="3">
    <source>
    </source>
</evidence>
<evidence type="ECO:0000305" key="4"/>